<protein>
    <recommendedName>
        <fullName evidence="1">Ribosome maturation factor RimM</fullName>
    </recommendedName>
</protein>
<comment type="function">
    <text evidence="1">An accessory protein needed during the final step in the assembly of 30S ribosomal subunit, possibly for assembly of the head region. Essential for efficient processing of 16S rRNA. May be needed both before and after RbfA during the maturation of 16S rRNA. It has affinity for free ribosomal 30S subunits but not for 70S ribosomes.</text>
</comment>
<comment type="subunit">
    <text evidence="1">Binds ribosomal protein uS19.</text>
</comment>
<comment type="subcellular location">
    <subcellularLocation>
        <location evidence="1">Cytoplasm</location>
    </subcellularLocation>
</comment>
<comment type="domain">
    <text evidence="1">The PRC barrel domain binds ribosomal protein uS19.</text>
</comment>
<comment type="similarity">
    <text evidence="1">Belongs to the RimM family.</text>
</comment>
<proteinExistence type="inferred from homology"/>
<feature type="chain" id="PRO_0000244146" description="Ribosome maturation factor RimM">
    <location>
        <begin position="1"/>
        <end position="176"/>
    </location>
</feature>
<feature type="domain" description="PRC barrel" evidence="1">
    <location>
        <begin position="100"/>
        <end position="173"/>
    </location>
</feature>
<gene>
    <name evidence="1" type="primary">rimM</name>
    <name type="ordered locus">PMN2A_1181</name>
</gene>
<accession>Q46IK7</accession>
<reference key="1">
    <citation type="journal article" date="2007" name="PLoS Genet.">
        <title>Patterns and implications of gene gain and loss in the evolution of Prochlorococcus.</title>
        <authorList>
            <person name="Kettler G.C."/>
            <person name="Martiny A.C."/>
            <person name="Huang K."/>
            <person name="Zucker J."/>
            <person name="Coleman M.L."/>
            <person name="Rodrigue S."/>
            <person name="Chen F."/>
            <person name="Lapidus A."/>
            <person name="Ferriera S."/>
            <person name="Johnson J."/>
            <person name="Steglich C."/>
            <person name="Church G.M."/>
            <person name="Richardson P."/>
            <person name="Chisholm S.W."/>
        </authorList>
    </citation>
    <scope>NUCLEOTIDE SEQUENCE [LARGE SCALE GENOMIC DNA]</scope>
    <source>
        <strain>NATL2A</strain>
    </source>
</reference>
<dbReference type="EMBL" id="CP000095">
    <property type="protein sequence ID" value="AAZ58671.1"/>
    <property type="molecule type" value="Genomic_DNA"/>
</dbReference>
<dbReference type="RefSeq" id="WP_011295525.1">
    <property type="nucleotide sequence ID" value="NC_007335.2"/>
</dbReference>
<dbReference type="SMR" id="Q46IK7"/>
<dbReference type="STRING" id="59920.PMN2A_1181"/>
<dbReference type="KEGG" id="pmn:PMN2A_1181"/>
<dbReference type="HOGENOM" id="CLU_077636_3_0_3"/>
<dbReference type="OrthoDB" id="9810331at2"/>
<dbReference type="PhylomeDB" id="Q46IK7"/>
<dbReference type="Proteomes" id="UP000002535">
    <property type="component" value="Chromosome"/>
</dbReference>
<dbReference type="GO" id="GO:0005737">
    <property type="term" value="C:cytoplasm"/>
    <property type="evidence" value="ECO:0007669"/>
    <property type="project" value="UniProtKB-SubCell"/>
</dbReference>
<dbReference type="GO" id="GO:0005840">
    <property type="term" value="C:ribosome"/>
    <property type="evidence" value="ECO:0007669"/>
    <property type="project" value="InterPro"/>
</dbReference>
<dbReference type="GO" id="GO:0043022">
    <property type="term" value="F:ribosome binding"/>
    <property type="evidence" value="ECO:0007669"/>
    <property type="project" value="InterPro"/>
</dbReference>
<dbReference type="GO" id="GO:0042274">
    <property type="term" value="P:ribosomal small subunit biogenesis"/>
    <property type="evidence" value="ECO:0007669"/>
    <property type="project" value="UniProtKB-UniRule"/>
</dbReference>
<dbReference type="GO" id="GO:0006364">
    <property type="term" value="P:rRNA processing"/>
    <property type="evidence" value="ECO:0007669"/>
    <property type="project" value="UniProtKB-UniRule"/>
</dbReference>
<dbReference type="Gene3D" id="2.30.30.240">
    <property type="entry name" value="PRC-barrel domain"/>
    <property type="match status" value="1"/>
</dbReference>
<dbReference type="Gene3D" id="2.40.30.60">
    <property type="entry name" value="RimM"/>
    <property type="match status" value="1"/>
</dbReference>
<dbReference type="HAMAP" id="MF_00014">
    <property type="entry name" value="Ribosome_mat_RimM"/>
    <property type="match status" value="1"/>
</dbReference>
<dbReference type="InterPro" id="IPR011033">
    <property type="entry name" value="PRC_barrel-like_sf"/>
</dbReference>
<dbReference type="InterPro" id="IPR056792">
    <property type="entry name" value="PRC_RimM"/>
</dbReference>
<dbReference type="InterPro" id="IPR011961">
    <property type="entry name" value="RimM"/>
</dbReference>
<dbReference type="InterPro" id="IPR002676">
    <property type="entry name" value="RimM_N"/>
</dbReference>
<dbReference type="InterPro" id="IPR036976">
    <property type="entry name" value="RimM_N_sf"/>
</dbReference>
<dbReference type="InterPro" id="IPR009000">
    <property type="entry name" value="Transl_B-barrel_sf"/>
</dbReference>
<dbReference type="NCBIfam" id="TIGR02273">
    <property type="entry name" value="16S_RimM"/>
    <property type="match status" value="1"/>
</dbReference>
<dbReference type="PANTHER" id="PTHR33692">
    <property type="entry name" value="RIBOSOME MATURATION FACTOR RIMM"/>
    <property type="match status" value="1"/>
</dbReference>
<dbReference type="PANTHER" id="PTHR33692:SF1">
    <property type="entry name" value="RIBOSOME MATURATION FACTOR RIMM"/>
    <property type="match status" value="1"/>
</dbReference>
<dbReference type="Pfam" id="PF24986">
    <property type="entry name" value="PRC_RimM"/>
    <property type="match status" value="1"/>
</dbReference>
<dbReference type="Pfam" id="PF01782">
    <property type="entry name" value="RimM"/>
    <property type="match status" value="1"/>
</dbReference>
<dbReference type="SUPFAM" id="SSF50346">
    <property type="entry name" value="PRC-barrel domain"/>
    <property type="match status" value="1"/>
</dbReference>
<dbReference type="SUPFAM" id="SSF50447">
    <property type="entry name" value="Translation proteins"/>
    <property type="match status" value="1"/>
</dbReference>
<name>RIMM_PROMT</name>
<keyword id="KW-0143">Chaperone</keyword>
<keyword id="KW-0963">Cytoplasm</keyword>
<keyword id="KW-1185">Reference proteome</keyword>
<keyword id="KW-0690">Ribosome biogenesis</keyword>
<keyword id="KW-0698">rRNA processing</keyword>
<sequence length="176" mass="19910">MFEKDKWMTIGEIVAPQGLRGDLRIKPSSDFPERFTKPGKRWIQKTDELPTEIKLTKGKLIPGKSIYVLSIEGVSTRSSAEEIIGWKLVIPIDSRPMLSKDEYHYHDLIGLEARRGPSKALIGYVTDLIKGGNDLLEIELVEGKKVLVPFVKEIVPEIEIKEKWLLINPPPGLLEL</sequence>
<organism>
    <name type="scientific">Prochlorococcus marinus (strain NATL2A)</name>
    <dbReference type="NCBI Taxonomy" id="59920"/>
    <lineage>
        <taxon>Bacteria</taxon>
        <taxon>Bacillati</taxon>
        <taxon>Cyanobacteriota</taxon>
        <taxon>Cyanophyceae</taxon>
        <taxon>Synechococcales</taxon>
        <taxon>Prochlorococcaceae</taxon>
        <taxon>Prochlorococcus</taxon>
    </lineage>
</organism>
<evidence type="ECO:0000255" key="1">
    <source>
        <dbReference type="HAMAP-Rule" id="MF_00014"/>
    </source>
</evidence>